<evidence type="ECO:0000255" key="1">
    <source>
        <dbReference type="HAMAP-Rule" id="MF_01633"/>
    </source>
</evidence>
<comment type="function">
    <text evidence="1">Catalyzes the ATP-dependent conversion of 7-carboxy-7-deazaguanine (CDG) to 7-cyano-7-deazaguanine (preQ(0)).</text>
</comment>
<comment type="catalytic activity">
    <reaction evidence="1">
        <text>7-carboxy-7-deazaguanine + NH4(+) + ATP = 7-cyano-7-deazaguanine + ADP + phosphate + H2O + H(+)</text>
        <dbReference type="Rhea" id="RHEA:27982"/>
        <dbReference type="ChEBI" id="CHEBI:15377"/>
        <dbReference type="ChEBI" id="CHEBI:15378"/>
        <dbReference type="ChEBI" id="CHEBI:28938"/>
        <dbReference type="ChEBI" id="CHEBI:30616"/>
        <dbReference type="ChEBI" id="CHEBI:43474"/>
        <dbReference type="ChEBI" id="CHEBI:45075"/>
        <dbReference type="ChEBI" id="CHEBI:61036"/>
        <dbReference type="ChEBI" id="CHEBI:456216"/>
        <dbReference type="EC" id="6.3.4.20"/>
    </reaction>
</comment>
<comment type="cofactor">
    <cofactor evidence="1">
        <name>Zn(2+)</name>
        <dbReference type="ChEBI" id="CHEBI:29105"/>
    </cofactor>
    <text evidence="1">Binds 1 zinc ion per subunit.</text>
</comment>
<comment type="pathway">
    <text evidence="1">Purine metabolism; 7-cyano-7-deazaguanine biosynthesis.</text>
</comment>
<comment type="similarity">
    <text evidence="1">Belongs to the QueC family.</text>
</comment>
<protein>
    <recommendedName>
        <fullName evidence="1">7-cyano-7-deazaguanine synthase 1</fullName>
        <ecNumber evidence="1">6.3.4.20</ecNumber>
    </recommendedName>
    <alternativeName>
        <fullName evidence="1">7-cyano-7-carbaguanine synthase 1</fullName>
    </alternativeName>
    <alternativeName>
        <fullName evidence="1">PreQ(0) synthase 1</fullName>
    </alternativeName>
    <alternativeName>
        <fullName evidence="1">Queuosine biosynthesis protein QueC 1</fullName>
    </alternativeName>
</protein>
<dbReference type="EC" id="6.3.4.20" evidence="1"/>
<dbReference type="EMBL" id="CP000083">
    <property type="protein sequence ID" value="AAZ28763.1"/>
    <property type="molecule type" value="Genomic_DNA"/>
</dbReference>
<dbReference type="SMR" id="Q480C9"/>
<dbReference type="STRING" id="167879.CPS_2885"/>
<dbReference type="KEGG" id="cps:CPS_2885"/>
<dbReference type="eggNOG" id="COG0603">
    <property type="taxonomic scope" value="Bacteria"/>
</dbReference>
<dbReference type="HOGENOM" id="CLU_081854_1_0_6"/>
<dbReference type="UniPathway" id="UPA00391"/>
<dbReference type="Proteomes" id="UP000000547">
    <property type="component" value="Chromosome"/>
</dbReference>
<dbReference type="GO" id="GO:0005524">
    <property type="term" value="F:ATP binding"/>
    <property type="evidence" value="ECO:0007669"/>
    <property type="project" value="UniProtKB-UniRule"/>
</dbReference>
<dbReference type="GO" id="GO:0016879">
    <property type="term" value="F:ligase activity, forming carbon-nitrogen bonds"/>
    <property type="evidence" value="ECO:0007669"/>
    <property type="project" value="UniProtKB-UniRule"/>
</dbReference>
<dbReference type="GO" id="GO:0008270">
    <property type="term" value="F:zinc ion binding"/>
    <property type="evidence" value="ECO:0007669"/>
    <property type="project" value="UniProtKB-UniRule"/>
</dbReference>
<dbReference type="GO" id="GO:0008616">
    <property type="term" value="P:queuosine biosynthetic process"/>
    <property type="evidence" value="ECO:0007669"/>
    <property type="project" value="UniProtKB-UniRule"/>
</dbReference>
<dbReference type="CDD" id="cd01995">
    <property type="entry name" value="QueC-like"/>
    <property type="match status" value="1"/>
</dbReference>
<dbReference type="Gene3D" id="3.40.50.620">
    <property type="entry name" value="HUPs"/>
    <property type="match status" value="1"/>
</dbReference>
<dbReference type="HAMAP" id="MF_01633">
    <property type="entry name" value="QueC"/>
    <property type="match status" value="1"/>
</dbReference>
<dbReference type="InterPro" id="IPR018317">
    <property type="entry name" value="QueC"/>
</dbReference>
<dbReference type="InterPro" id="IPR014729">
    <property type="entry name" value="Rossmann-like_a/b/a_fold"/>
</dbReference>
<dbReference type="NCBIfam" id="TIGR00364">
    <property type="entry name" value="7-cyano-7-deazaguanine synthase QueC"/>
    <property type="match status" value="1"/>
</dbReference>
<dbReference type="PANTHER" id="PTHR42914">
    <property type="entry name" value="7-CYANO-7-DEAZAGUANINE SYNTHASE"/>
    <property type="match status" value="1"/>
</dbReference>
<dbReference type="PANTHER" id="PTHR42914:SF1">
    <property type="entry name" value="7-CYANO-7-DEAZAGUANINE SYNTHASE"/>
    <property type="match status" value="1"/>
</dbReference>
<dbReference type="Pfam" id="PF06508">
    <property type="entry name" value="QueC"/>
    <property type="match status" value="1"/>
</dbReference>
<dbReference type="PIRSF" id="PIRSF006293">
    <property type="entry name" value="ExsB"/>
    <property type="match status" value="1"/>
</dbReference>
<dbReference type="SUPFAM" id="SSF52402">
    <property type="entry name" value="Adenine nucleotide alpha hydrolases-like"/>
    <property type="match status" value="1"/>
</dbReference>
<keyword id="KW-0067">ATP-binding</keyword>
<keyword id="KW-0436">Ligase</keyword>
<keyword id="KW-0479">Metal-binding</keyword>
<keyword id="KW-0547">Nucleotide-binding</keyword>
<keyword id="KW-0671">Queuosine biosynthesis</keyword>
<keyword id="KW-0862">Zinc</keyword>
<accession>Q480C9</accession>
<reference key="1">
    <citation type="journal article" date="2005" name="Proc. Natl. Acad. Sci. U.S.A.">
        <title>The psychrophilic lifestyle as revealed by the genome sequence of Colwellia psychrerythraea 34H through genomic and proteomic analyses.</title>
        <authorList>
            <person name="Methe B.A."/>
            <person name="Nelson K.E."/>
            <person name="Deming J.W."/>
            <person name="Momen B."/>
            <person name="Melamud E."/>
            <person name="Zhang X."/>
            <person name="Moult J."/>
            <person name="Madupu R."/>
            <person name="Nelson W.C."/>
            <person name="Dodson R.J."/>
            <person name="Brinkac L.M."/>
            <person name="Daugherty S.C."/>
            <person name="Durkin A.S."/>
            <person name="DeBoy R.T."/>
            <person name="Kolonay J.F."/>
            <person name="Sullivan S.A."/>
            <person name="Zhou L."/>
            <person name="Davidsen T.M."/>
            <person name="Wu M."/>
            <person name="Huston A.L."/>
            <person name="Lewis M."/>
            <person name="Weaver B."/>
            <person name="Weidman J.F."/>
            <person name="Khouri H."/>
            <person name="Utterback T.R."/>
            <person name="Feldblyum T.V."/>
            <person name="Fraser C.M."/>
        </authorList>
    </citation>
    <scope>NUCLEOTIDE SEQUENCE [LARGE SCALE GENOMIC DNA]</scope>
    <source>
        <strain>34H / ATCC BAA-681</strain>
    </source>
</reference>
<gene>
    <name evidence="1" type="primary">queC1</name>
    <name type="ordered locus">CPS_2885</name>
</gene>
<name>QUEC1_COLP3</name>
<sequence>MAEKVVVIYSGGMDSFTVLNRAKKDGKEVFALSFDYGQRHVKELECASIVCKELAVNHKVIDISAINQLLAGSSLTDDIDIPEGHYEAESMKSTVVPNRNMILLSLAVAYAVSVGAEQVYYGAHSGDHAIYPDCRPEFVEKMNDVCKIANYESVEIFSPYLSVDKTAILADGIKMGLDYSNTWTCYNGREKACGKCGSCQERLEAFEENNATDPIPYE</sequence>
<proteinExistence type="inferred from homology"/>
<feature type="chain" id="PRO_0000246831" description="7-cyano-7-deazaguanine synthase 1">
    <location>
        <begin position="1"/>
        <end position="218"/>
    </location>
</feature>
<feature type="binding site" evidence="1">
    <location>
        <begin position="9"/>
        <end position="19"/>
    </location>
    <ligand>
        <name>ATP</name>
        <dbReference type="ChEBI" id="CHEBI:30616"/>
    </ligand>
</feature>
<feature type="binding site" evidence="1">
    <location>
        <position position="185"/>
    </location>
    <ligand>
        <name>Zn(2+)</name>
        <dbReference type="ChEBI" id="CHEBI:29105"/>
    </ligand>
</feature>
<feature type="binding site" evidence="1">
    <location>
        <position position="193"/>
    </location>
    <ligand>
        <name>Zn(2+)</name>
        <dbReference type="ChEBI" id="CHEBI:29105"/>
    </ligand>
</feature>
<feature type="binding site" evidence="1">
    <location>
        <position position="196"/>
    </location>
    <ligand>
        <name>Zn(2+)</name>
        <dbReference type="ChEBI" id="CHEBI:29105"/>
    </ligand>
</feature>
<feature type="binding site" evidence="1">
    <location>
        <position position="199"/>
    </location>
    <ligand>
        <name>Zn(2+)</name>
        <dbReference type="ChEBI" id="CHEBI:29105"/>
    </ligand>
</feature>
<organism>
    <name type="scientific">Colwellia psychrerythraea (strain 34H / ATCC BAA-681)</name>
    <name type="common">Vibrio psychroerythus</name>
    <dbReference type="NCBI Taxonomy" id="167879"/>
    <lineage>
        <taxon>Bacteria</taxon>
        <taxon>Pseudomonadati</taxon>
        <taxon>Pseudomonadota</taxon>
        <taxon>Gammaproteobacteria</taxon>
        <taxon>Alteromonadales</taxon>
        <taxon>Colwelliaceae</taxon>
        <taxon>Colwellia</taxon>
    </lineage>
</organism>